<feature type="chain" id="PRO_1000078217" description="Hydroxyethylthiazole kinase">
    <location>
        <begin position="1"/>
        <end position="265"/>
    </location>
</feature>
<feature type="binding site" evidence="1">
    <location>
        <position position="50"/>
    </location>
    <ligand>
        <name>substrate</name>
    </ligand>
</feature>
<feature type="binding site" evidence="1">
    <location>
        <position position="125"/>
    </location>
    <ligand>
        <name>ATP</name>
        <dbReference type="ChEBI" id="CHEBI:30616"/>
    </ligand>
</feature>
<feature type="binding site" evidence="1">
    <location>
        <position position="171"/>
    </location>
    <ligand>
        <name>ATP</name>
        <dbReference type="ChEBI" id="CHEBI:30616"/>
    </ligand>
</feature>
<feature type="binding site" evidence="1">
    <location>
        <position position="198"/>
    </location>
    <ligand>
        <name>substrate</name>
    </ligand>
</feature>
<sequence>MQPDLHCRTLAAHTLKHFRALSPLTHCMTNDVVQTFTANTLLALGASPAMVIDPVEARPFAAIANALLVNVGTLTASRADAMRATVESAYDAKIPWTLDPVAVGALEFRRRFCLDLLSLRPAAIRGNASEILALSGMALGGRGVDTTEAALAALPAAQALARQIDCIVVVTGEIDYVTNGQRTLSIPGGDPLMTRIVGTGCALSAVVAASCALPGAALDNVASACCWMKLAGQAAAERSEGPGSFIPAFLDALYHLDVEAANATN</sequence>
<evidence type="ECO:0000255" key="1">
    <source>
        <dbReference type="HAMAP-Rule" id="MF_00228"/>
    </source>
</evidence>
<name>THIM_SALPB</name>
<keyword id="KW-0067">ATP-binding</keyword>
<keyword id="KW-0418">Kinase</keyword>
<keyword id="KW-0460">Magnesium</keyword>
<keyword id="KW-0479">Metal-binding</keyword>
<keyword id="KW-0547">Nucleotide-binding</keyword>
<keyword id="KW-0784">Thiamine biosynthesis</keyword>
<keyword id="KW-0808">Transferase</keyword>
<organism>
    <name type="scientific">Salmonella paratyphi B (strain ATCC BAA-1250 / SPB7)</name>
    <dbReference type="NCBI Taxonomy" id="1016998"/>
    <lineage>
        <taxon>Bacteria</taxon>
        <taxon>Pseudomonadati</taxon>
        <taxon>Pseudomonadota</taxon>
        <taxon>Gammaproteobacteria</taxon>
        <taxon>Enterobacterales</taxon>
        <taxon>Enterobacteriaceae</taxon>
        <taxon>Salmonella</taxon>
    </lineage>
</organism>
<accession>A9N7J2</accession>
<comment type="function">
    <text evidence="1">Catalyzes the phosphorylation of the hydroxyl group of 4-methyl-5-beta-hydroxyethylthiazole (THZ).</text>
</comment>
<comment type="catalytic activity">
    <reaction evidence="1">
        <text>5-(2-hydroxyethyl)-4-methylthiazole + ATP = 4-methyl-5-(2-phosphooxyethyl)-thiazole + ADP + H(+)</text>
        <dbReference type="Rhea" id="RHEA:24212"/>
        <dbReference type="ChEBI" id="CHEBI:15378"/>
        <dbReference type="ChEBI" id="CHEBI:17957"/>
        <dbReference type="ChEBI" id="CHEBI:30616"/>
        <dbReference type="ChEBI" id="CHEBI:58296"/>
        <dbReference type="ChEBI" id="CHEBI:456216"/>
        <dbReference type="EC" id="2.7.1.50"/>
    </reaction>
</comment>
<comment type="cofactor">
    <cofactor evidence="1">
        <name>Mg(2+)</name>
        <dbReference type="ChEBI" id="CHEBI:18420"/>
    </cofactor>
</comment>
<comment type="pathway">
    <text evidence="1">Cofactor biosynthesis; thiamine diphosphate biosynthesis; 4-methyl-5-(2-phosphoethyl)-thiazole from 5-(2-hydroxyethyl)-4-methylthiazole: step 1/1.</text>
</comment>
<comment type="similarity">
    <text evidence="1">Belongs to the Thz kinase family.</text>
</comment>
<dbReference type="EC" id="2.7.1.50" evidence="1"/>
<dbReference type="EMBL" id="CP000886">
    <property type="protein sequence ID" value="ABX66300.1"/>
    <property type="molecule type" value="Genomic_DNA"/>
</dbReference>
<dbReference type="RefSeq" id="WP_001182165.1">
    <property type="nucleotide sequence ID" value="NC_010102.1"/>
</dbReference>
<dbReference type="SMR" id="A9N7J2"/>
<dbReference type="KEGG" id="spq:SPAB_00876"/>
<dbReference type="PATRIC" id="fig|1016998.12.peg.822"/>
<dbReference type="HOGENOM" id="CLU_019943_0_1_6"/>
<dbReference type="BioCyc" id="SENT1016998:SPAB_RS03610-MONOMER"/>
<dbReference type="UniPathway" id="UPA00060">
    <property type="reaction ID" value="UER00139"/>
</dbReference>
<dbReference type="Proteomes" id="UP000008556">
    <property type="component" value="Chromosome"/>
</dbReference>
<dbReference type="GO" id="GO:0005524">
    <property type="term" value="F:ATP binding"/>
    <property type="evidence" value="ECO:0007669"/>
    <property type="project" value="UniProtKB-UniRule"/>
</dbReference>
<dbReference type="GO" id="GO:0004417">
    <property type="term" value="F:hydroxyethylthiazole kinase activity"/>
    <property type="evidence" value="ECO:0007669"/>
    <property type="project" value="UniProtKB-UniRule"/>
</dbReference>
<dbReference type="GO" id="GO:0000287">
    <property type="term" value="F:magnesium ion binding"/>
    <property type="evidence" value="ECO:0007669"/>
    <property type="project" value="UniProtKB-UniRule"/>
</dbReference>
<dbReference type="GO" id="GO:0009228">
    <property type="term" value="P:thiamine biosynthetic process"/>
    <property type="evidence" value="ECO:0007669"/>
    <property type="project" value="UniProtKB-KW"/>
</dbReference>
<dbReference type="GO" id="GO:0009229">
    <property type="term" value="P:thiamine diphosphate biosynthetic process"/>
    <property type="evidence" value="ECO:0007669"/>
    <property type="project" value="UniProtKB-UniRule"/>
</dbReference>
<dbReference type="CDD" id="cd01170">
    <property type="entry name" value="THZ_kinase"/>
    <property type="match status" value="1"/>
</dbReference>
<dbReference type="FunFam" id="3.40.1190.20:FF:000015">
    <property type="entry name" value="Hydroxyethylthiazole kinase"/>
    <property type="match status" value="1"/>
</dbReference>
<dbReference type="Gene3D" id="3.40.1190.20">
    <property type="match status" value="1"/>
</dbReference>
<dbReference type="HAMAP" id="MF_00228">
    <property type="entry name" value="Thz_kinase"/>
    <property type="match status" value="1"/>
</dbReference>
<dbReference type="InterPro" id="IPR000417">
    <property type="entry name" value="Hyethyz_kinase"/>
</dbReference>
<dbReference type="InterPro" id="IPR029056">
    <property type="entry name" value="Ribokinase-like"/>
</dbReference>
<dbReference type="NCBIfam" id="NF006830">
    <property type="entry name" value="PRK09355.1"/>
    <property type="match status" value="1"/>
</dbReference>
<dbReference type="NCBIfam" id="TIGR00694">
    <property type="entry name" value="thiM"/>
    <property type="match status" value="1"/>
</dbReference>
<dbReference type="Pfam" id="PF02110">
    <property type="entry name" value="HK"/>
    <property type="match status" value="1"/>
</dbReference>
<dbReference type="PIRSF" id="PIRSF000513">
    <property type="entry name" value="Thz_kinase"/>
    <property type="match status" value="1"/>
</dbReference>
<dbReference type="PRINTS" id="PR01099">
    <property type="entry name" value="HYETHTZKNASE"/>
</dbReference>
<dbReference type="SUPFAM" id="SSF53613">
    <property type="entry name" value="Ribokinase-like"/>
    <property type="match status" value="1"/>
</dbReference>
<gene>
    <name evidence="1" type="primary">thiM</name>
    <name type="ordered locus">SPAB_00876</name>
</gene>
<reference key="1">
    <citation type="submission" date="2007-11" db="EMBL/GenBank/DDBJ databases">
        <authorList>
            <consortium name="The Salmonella enterica serovar Paratyphi B Genome Sequencing Project"/>
            <person name="McClelland M."/>
            <person name="Sanderson E.K."/>
            <person name="Porwollik S."/>
            <person name="Spieth J."/>
            <person name="Clifton W.S."/>
            <person name="Fulton R."/>
            <person name="Cordes M."/>
            <person name="Wollam A."/>
            <person name="Shah N."/>
            <person name="Pepin K."/>
            <person name="Bhonagiri V."/>
            <person name="Nash W."/>
            <person name="Johnson M."/>
            <person name="Thiruvilangam P."/>
            <person name="Wilson R."/>
        </authorList>
    </citation>
    <scope>NUCLEOTIDE SEQUENCE [LARGE SCALE GENOMIC DNA]</scope>
    <source>
        <strain>ATCC BAA-1250 / SPB7</strain>
    </source>
</reference>
<protein>
    <recommendedName>
        <fullName evidence="1">Hydroxyethylthiazole kinase</fullName>
        <ecNumber evidence="1">2.7.1.50</ecNumber>
    </recommendedName>
    <alternativeName>
        <fullName evidence="1">4-methyl-5-beta-hydroxyethylthiazole kinase</fullName>
        <shortName evidence="1">TH kinase</shortName>
        <shortName evidence="1">Thz kinase</shortName>
    </alternativeName>
</protein>
<proteinExistence type="inferred from homology"/>